<proteinExistence type="evidence at protein level"/>
<name>AAE_RAUVE</name>
<gene>
    <name evidence="1" type="primary">AAE</name>
</gene>
<accession>P86830</accession>
<sequence>NALFILGNIGNNDVNYAFPDRAIEEIRFYVPFITEAVANATREIIR</sequence>
<organism>
    <name type="scientific">Rauvolfia verticillata</name>
    <name type="common">Common devil-pepper</name>
    <name type="synonym">Dissolena verticillata</name>
    <dbReference type="NCBI Taxonomy" id="329875"/>
    <lineage>
        <taxon>Eukaryota</taxon>
        <taxon>Viridiplantae</taxon>
        <taxon>Streptophyta</taxon>
        <taxon>Embryophyta</taxon>
        <taxon>Tracheophyta</taxon>
        <taxon>Spermatophyta</taxon>
        <taxon>Magnoliopsida</taxon>
        <taxon>eudicotyledons</taxon>
        <taxon>Gunneridae</taxon>
        <taxon>Pentapetalae</taxon>
        <taxon>asterids</taxon>
        <taxon>lamiids</taxon>
        <taxon>Gentianales</taxon>
        <taxon>Apocynaceae</taxon>
        <taxon>Rauvolfioideae</taxon>
        <taxon>Vinceae</taxon>
        <taxon>Rauvolfiinae</taxon>
        <taxon>Rauvolfia</taxon>
    </lineage>
</organism>
<keyword id="KW-0017">Alkaloid metabolism</keyword>
<keyword id="KW-0903">Direct protein sequencing</keyword>
<keyword id="KW-0325">Glycoprotein</keyword>
<keyword id="KW-0378">Hydrolase</keyword>
<feature type="chain" id="PRO_0000402568" description="Acetylajmalan esterase">
    <location>
        <begin position="1" status="less than"/>
        <end position="46" status="greater than"/>
    </location>
</feature>
<feature type="glycosylation site" description="N-linked (GlcNAc...) asparagine" evidence="2">
    <location>
        <position position="39"/>
    </location>
</feature>
<feature type="non-terminal residue" evidence="4">
    <location>
        <position position="1"/>
    </location>
</feature>
<feature type="non-terminal residue" evidence="4">
    <location>
        <position position="46"/>
    </location>
</feature>
<reference evidence="5" key="1">
    <citation type="journal article" date="2005" name="Planta">
        <title>Functional expression of an ajmaline pathway-specific esterase from Rauvolfia in a novel plant-virus expression system.</title>
        <authorList>
            <person name="Ruppert M."/>
            <person name="Woll J."/>
            <person name="Giritch A."/>
            <person name="Genady E."/>
            <person name="Ma X."/>
            <person name="Stockigt J."/>
        </authorList>
    </citation>
    <scope>PROTEIN SEQUENCE</scope>
    <scope>CATALYTIC ACTIVITY</scope>
</reference>
<evidence type="ECO:0000250" key="1">
    <source>
        <dbReference type="UniProtKB" id="Q3MKY2"/>
    </source>
</evidence>
<evidence type="ECO:0000255" key="2"/>
<evidence type="ECO:0000269" key="3">
    <source>
    </source>
</evidence>
<evidence type="ECO:0000303" key="4">
    <source>
    </source>
</evidence>
<evidence type="ECO:0000305" key="5"/>
<protein>
    <recommendedName>
        <fullName evidence="1">Acetylajmalan esterase</fullName>
        <ecNumber>3.1.1.80</ecNumber>
    </recommendedName>
</protein>
<dbReference type="EC" id="3.1.1.80"/>
<dbReference type="GlyCosmos" id="P86830">
    <property type="glycosylation" value="1 site, No reported glycans"/>
</dbReference>
<dbReference type="GO" id="GO:0033879">
    <property type="term" value="F:acetylajmaline esterase activity"/>
    <property type="evidence" value="ECO:0007669"/>
    <property type="project" value="UniProtKB-EC"/>
</dbReference>
<dbReference type="GO" id="GO:0009820">
    <property type="term" value="P:alkaloid metabolic process"/>
    <property type="evidence" value="ECO:0007669"/>
    <property type="project" value="UniProtKB-KW"/>
</dbReference>
<comment type="function">
    <text evidence="1">Deacetylates 17-O-acetylajmaline and 17-O-acetylnorajmaline, but is inactive toward other acetylated alkaloids.</text>
</comment>
<comment type="catalytic activity">
    <reaction evidence="1 3">
        <text>17-O-acetylajmaline + H2O = ajmaline + acetate + H(+)</text>
        <dbReference type="Rhea" id="RHEA:22124"/>
        <dbReference type="ChEBI" id="CHEBI:15377"/>
        <dbReference type="ChEBI" id="CHEBI:15378"/>
        <dbReference type="ChEBI" id="CHEBI:30089"/>
        <dbReference type="ChEBI" id="CHEBI:58567"/>
        <dbReference type="ChEBI" id="CHEBI:58679"/>
        <dbReference type="EC" id="3.1.1.80"/>
    </reaction>
</comment>
<comment type="catalytic activity">
    <reaction evidence="1 3">
        <text>17-O-acetylnorajmaline + H2O = norajmaline + acetate + H(+)</text>
        <dbReference type="Rhea" id="RHEA:23796"/>
        <dbReference type="ChEBI" id="CHEBI:15377"/>
        <dbReference type="ChEBI" id="CHEBI:15378"/>
        <dbReference type="ChEBI" id="CHEBI:30089"/>
        <dbReference type="ChEBI" id="CHEBI:77618"/>
        <dbReference type="ChEBI" id="CHEBI:77725"/>
        <dbReference type="EC" id="3.1.1.80"/>
    </reaction>
</comment>
<comment type="similarity">
    <text evidence="2">Belongs to the 'GDSL' lipolytic enzyme family.</text>
</comment>